<gene>
    <name type="primary">yycC</name>
    <name type="ordered locus">BSU40470</name>
</gene>
<protein>
    <recommendedName>
        <fullName>Uncharacterized protein YycC</fullName>
    </recommendedName>
</protein>
<feature type="chain" id="PRO_0000050072" description="Uncharacterized protein YycC">
    <location>
        <begin position="1"/>
        <end position="46"/>
    </location>
</feature>
<name>YYCC_BACSU</name>
<evidence type="ECO:0000305" key="1"/>
<dbReference type="EMBL" id="D26185">
    <property type="protein sequence ID" value="BAA05178.1"/>
    <property type="status" value="ALT_INIT"/>
    <property type="molecule type" value="Genomic_DNA"/>
</dbReference>
<dbReference type="EMBL" id="AL009126">
    <property type="protein sequence ID" value="CAB16084.1"/>
    <property type="molecule type" value="Genomic_DNA"/>
</dbReference>
<dbReference type="PIR" id="S65972">
    <property type="entry name" value="S65972"/>
</dbReference>
<dbReference type="RefSeq" id="NP_391927.1">
    <property type="nucleotide sequence ID" value="NC_000964.3"/>
</dbReference>
<dbReference type="RefSeq" id="WP_003242786.1">
    <property type="nucleotide sequence ID" value="NZ_OZ025638.1"/>
</dbReference>
<dbReference type="SMR" id="P37481"/>
<dbReference type="FunCoup" id="P37481">
    <property type="interactions" value="3"/>
</dbReference>
<dbReference type="STRING" id="224308.BSU40470"/>
<dbReference type="PaxDb" id="224308-BSU40470"/>
<dbReference type="EnsemblBacteria" id="CAB16084">
    <property type="protein sequence ID" value="CAB16084"/>
    <property type="gene ID" value="BSU_40470"/>
</dbReference>
<dbReference type="GeneID" id="937823"/>
<dbReference type="KEGG" id="bsu:BSU40470"/>
<dbReference type="PATRIC" id="fig|224308.179.peg.4381"/>
<dbReference type="eggNOG" id="COG3093">
    <property type="taxonomic scope" value="Bacteria"/>
</dbReference>
<dbReference type="InParanoid" id="P37481"/>
<dbReference type="OrthoDB" id="2357473at2"/>
<dbReference type="BioCyc" id="BSUB:BSU40470-MONOMER"/>
<dbReference type="PRO" id="PR:P37481"/>
<dbReference type="Proteomes" id="UP000001570">
    <property type="component" value="Chromosome"/>
</dbReference>
<dbReference type="InterPro" id="IPR025550">
    <property type="entry name" value="YycC"/>
</dbReference>
<dbReference type="Pfam" id="PF14174">
    <property type="entry name" value="YycC"/>
    <property type="match status" value="1"/>
</dbReference>
<sequence length="46" mass="5255">MRPLQISAETAQKLAESLNLPLEQIMHMPQHILLAKMAELQKEDKS</sequence>
<keyword id="KW-1185">Reference proteome</keyword>
<accession>P37481</accession>
<accession>O32297</accession>
<reference key="1">
    <citation type="journal article" date="1994" name="DNA Res.">
        <title>Systematic sequencing of the 180 kilobase region of the Bacillus subtilis chromosome containing the replication origin.</title>
        <authorList>
            <person name="Ogasawara N."/>
            <person name="Nakai S."/>
            <person name="Yoshikawa H."/>
        </authorList>
    </citation>
    <scope>NUCLEOTIDE SEQUENCE [GENOMIC DNA]</scope>
    <source>
        <strain>168</strain>
    </source>
</reference>
<reference key="2">
    <citation type="journal article" date="1997" name="Nature">
        <title>The complete genome sequence of the Gram-positive bacterium Bacillus subtilis.</title>
        <authorList>
            <person name="Kunst F."/>
            <person name="Ogasawara N."/>
            <person name="Moszer I."/>
            <person name="Albertini A.M."/>
            <person name="Alloni G."/>
            <person name="Azevedo V."/>
            <person name="Bertero M.G."/>
            <person name="Bessieres P."/>
            <person name="Bolotin A."/>
            <person name="Borchert S."/>
            <person name="Borriss R."/>
            <person name="Boursier L."/>
            <person name="Brans A."/>
            <person name="Braun M."/>
            <person name="Brignell S.C."/>
            <person name="Bron S."/>
            <person name="Brouillet S."/>
            <person name="Bruschi C.V."/>
            <person name="Caldwell B."/>
            <person name="Capuano V."/>
            <person name="Carter N.M."/>
            <person name="Choi S.-K."/>
            <person name="Codani J.-J."/>
            <person name="Connerton I.F."/>
            <person name="Cummings N.J."/>
            <person name="Daniel R.A."/>
            <person name="Denizot F."/>
            <person name="Devine K.M."/>
            <person name="Duesterhoeft A."/>
            <person name="Ehrlich S.D."/>
            <person name="Emmerson P.T."/>
            <person name="Entian K.-D."/>
            <person name="Errington J."/>
            <person name="Fabret C."/>
            <person name="Ferrari E."/>
            <person name="Foulger D."/>
            <person name="Fritz C."/>
            <person name="Fujita M."/>
            <person name="Fujita Y."/>
            <person name="Fuma S."/>
            <person name="Galizzi A."/>
            <person name="Galleron N."/>
            <person name="Ghim S.-Y."/>
            <person name="Glaser P."/>
            <person name="Goffeau A."/>
            <person name="Golightly E.J."/>
            <person name="Grandi G."/>
            <person name="Guiseppi G."/>
            <person name="Guy B.J."/>
            <person name="Haga K."/>
            <person name="Haiech J."/>
            <person name="Harwood C.R."/>
            <person name="Henaut A."/>
            <person name="Hilbert H."/>
            <person name="Holsappel S."/>
            <person name="Hosono S."/>
            <person name="Hullo M.-F."/>
            <person name="Itaya M."/>
            <person name="Jones L.-M."/>
            <person name="Joris B."/>
            <person name="Karamata D."/>
            <person name="Kasahara Y."/>
            <person name="Klaerr-Blanchard M."/>
            <person name="Klein C."/>
            <person name="Kobayashi Y."/>
            <person name="Koetter P."/>
            <person name="Koningstein G."/>
            <person name="Krogh S."/>
            <person name="Kumano M."/>
            <person name="Kurita K."/>
            <person name="Lapidus A."/>
            <person name="Lardinois S."/>
            <person name="Lauber J."/>
            <person name="Lazarevic V."/>
            <person name="Lee S.-M."/>
            <person name="Levine A."/>
            <person name="Liu H."/>
            <person name="Masuda S."/>
            <person name="Mauel C."/>
            <person name="Medigue C."/>
            <person name="Medina N."/>
            <person name="Mellado R.P."/>
            <person name="Mizuno M."/>
            <person name="Moestl D."/>
            <person name="Nakai S."/>
            <person name="Noback M."/>
            <person name="Noone D."/>
            <person name="O'Reilly M."/>
            <person name="Ogawa K."/>
            <person name="Ogiwara A."/>
            <person name="Oudega B."/>
            <person name="Park S.-H."/>
            <person name="Parro V."/>
            <person name="Pohl T.M."/>
            <person name="Portetelle D."/>
            <person name="Porwollik S."/>
            <person name="Prescott A.M."/>
            <person name="Presecan E."/>
            <person name="Pujic P."/>
            <person name="Purnelle B."/>
            <person name="Rapoport G."/>
            <person name="Rey M."/>
            <person name="Reynolds S."/>
            <person name="Rieger M."/>
            <person name="Rivolta C."/>
            <person name="Rocha E."/>
            <person name="Roche B."/>
            <person name="Rose M."/>
            <person name="Sadaie Y."/>
            <person name="Sato T."/>
            <person name="Scanlan E."/>
            <person name="Schleich S."/>
            <person name="Schroeter R."/>
            <person name="Scoffone F."/>
            <person name="Sekiguchi J."/>
            <person name="Sekowska A."/>
            <person name="Seror S.J."/>
            <person name="Serror P."/>
            <person name="Shin B.-S."/>
            <person name="Soldo B."/>
            <person name="Sorokin A."/>
            <person name="Tacconi E."/>
            <person name="Takagi T."/>
            <person name="Takahashi H."/>
            <person name="Takemaru K."/>
            <person name="Takeuchi M."/>
            <person name="Tamakoshi A."/>
            <person name="Tanaka T."/>
            <person name="Terpstra P."/>
            <person name="Tognoni A."/>
            <person name="Tosato V."/>
            <person name="Uchiyama S."/>
            <person name="Vandenbol M."/>
            <person name="Vannier F."/>
            <person name="Vassarotti A."/>
            <person name="Viari A."/>
            <person name="Wambutt R."/>
            <person name="Wedler E."/>
            <person name="Wedler H."/>
            <person name="Weitzenegger T."/>
            <person name="Winters P."/>
            <person name="Wipat A."/>
            <person name="Yamamoto H."/>
            <person name="Yamane K."/>
            <person name="Yasumoto K."/>
            <person name="Yata K."/>
            <person name="Yoshida K."/>
            <person name="Yoshikawa H.-F."/>
            <person name="Zumstein E."/>
            <person name="Yoshikawa H."/>
            <person name="Danchin A."/>
        </authorList>
    </citation>
    <scope>NUCLEOTIDE SEQUENCE [LARGE SCALE GENOMIC DNA]</scope>
    <source>
        <strain>168</strain>
    </source>
</reference>
<reference key="3">
    <citation type="journal article" date="2003" name="Mol. Microbiol.">
        <title>Identification of additional TnrA-regulated genes of Bacillus subtilis associated with a TnrA box.</title>
        <authorList>
            <person name="Yoshida K."/>
            <person name="Yamaguchi H."/>
            <person name="Kinehara M."/>
            <person name="Ohki Y.-H."/>
            <person name="Nakaura Y."/>
            <person name="Fujita Y."/>
        </authorList>
    </citation>
    <scope>REGULATION BY TNRA</scope>
</reference>
<proteinExistence type="evidence at transcript level"/>
<comment type="induction">
    <text>Negatively regulated by TnrA under nitrogen-limited conditions.</text>
</comment>
<comment type="sequence caution" evidence="1">
    <conflict type="erroneous initiation">
        <sequence resource="EMBL-CDS" id="BAA05178"/>
    </conflict>
</comment>
<organism>
    <name type="scientific">Bacillus subtilis (strain 168)</name>
    <dbReference type="NCBI Taxonomy" id="224308"/>
    <lineage>
        <taxon>Bacteria</taxon>
        <taxon>Bacillati</taxon>
        <taxon>Bacillota</taxon>
        <taxon>Bacilli</taxon>
        <taxon>Bacillales</taxon>
        <taxon>Bacillaceae</taxon>
        <taxon>Bacillus</taxon>
    </lineage>
</organism>